<evidence type="ECO:0000255" key="1">
    <source>
        <dbReference type="PROSITE-ProRule" id="PRU00393"/>
    </source>
</evidence>
<evidence type="ECO:0000255" key="2">
    <source>
        <dbReference type="PROSITE-ProRule" id="PRU00394"/>
    </source>
</evidence>
<evidence type="ECO:0000256" key="3">
    <source>
        <dbReference type="SAM" id="MobiDB-lite"/>
    </source>
</evidence>
<evidence type="ECO:0000305" key="4"/>
<reference key="1">
    <citation type="journal article" date="1994" name="J. Bacteriol.">
        <title>Characterization of the pcaR regulatory gene from Pseudomonas putida, which is required for the complete degradation of p-hydroxybenzoate.</title>
        <authorList>
            <person name="Romero-Steiner S."/>
            <person name="Parales R.E."/>
            <person name="Harwood C.S."/>
            <person name="Houghton J.E."/>
        </authorList>
    </citation>
    <scope>NUCLEOTIDE SEQUENCE [GENOMIC DNA]</scope>
    <source>
        <strain>PRS2000</strain>
    </source>
</reference>
<sequence length="291" mass="31811">MSDETLVNDPVNPEPARPASAAMAPPIVASPAKRIQAFTGDPDFMTSLARGLAVIQAFQERKRHLTIAQISHRTEIPRAAVRRCLHTLIKLGYATSDGRTYSLLPKVLTLGHAYLSSTPLAISAQPYLDRISDQLHEAANMATLEGDDILYIARSATVERLISVDLSVGGRLPAYCTSMGRILLAAMDDTSLREYLGRADLKARTSRTLHDPESLFACIQQVRAQGWCVVDQELEQGLRSIAVPIYDASGQVLAALNVSTHVGRVTRSELEQRFLPILLAASRDLCHQLFG</sequence>
<keyword id="KW-0010">Activator</keyword>
<keyword id="KW-0058">Aromatic hydrocarbons catabolism</keyword>
<keyword id="KW-0238">DNA-binding</keyword>
<keyword id="KW-0804">Transcription</keyword>
<keyword id="KW-0805">Transcription regulation</keyword>
<comment type="function">
    <text>Positive regulator of all genes within the pca regulon, pcaBDC, pcaIJ and pcaF. Also required for the chemotactic response to aromatic compounds.</text>
</comment>
<comment type="induction">
    <text>By beta-ketoadipate.</text>
</comment>
<comment type="caution">
    <text evidence="4">It is uncertain whether Met-1, Met-23 or Met-45 is the initiator.</text>
</comment>
<feature type="chain" id="PRO_0000201764" description="Pca regulon regulatory protein">
    <location>
        <begin position="1"/>
        <end position="291"/>
    </location>
</feature>
<feature type="domain" description="HTH iclR-type" evidence="1">
    <location>
        <begin position="45"/>
        <end position="105"/>
    </location>
</feature>
<feature type="domain" description="IclR-ED" evidence="2">
    <location>
        <begin position="120"/>
        <end position="291"/>
    </location>
</feature>
<feature type="DNA-binding region" description="H-T-H motif" evidence="1">
    <location>
        <begin position="67"/>
        <end position="86"/>
    </location>
</feature>
<feature type="region of interest" description="Disordered" evidence="3">
    <location>
        <begin position="1"/>
        <end position="22"/>
    </location>
</feature>
<organism>
    <name type="scientific">Pseudomonas putida</name>
    <name type="common">Arthrobacter siderocapsulatus</name>
    <dbReference type="NCBI Taxonomy" id="303"/>
    <lineage>
        <taxon>Bacteria</taxon>
        <taxon>Pseudomonadati</taxon>
        <taxon>Pseudomonadota</taxon>
        <taxon>Gammaproteobacteria</taxon>
        <taxon>Pseudomonadales</taxon>
        <taxon>Pseudomonadaceae</taxon>
        <taxon>Pseudomonas</taxon>
    </lineage>
</organism>
<protein>
    <recommendedName>
        <fullName>Pca regulon regulatory protein</fullName>
    </recommendedName>
</protein>
<gene>
    <name type="primary">pcaR</name>
</gene>
<accession>Q52154</accession>
<dbReference type="EMBL" id="L33795">
    <property type="protein sequence ID" value="AAA57136.1"/>
    <property type="molecule type" value="Genomic_DNA"/>
</dbReference>
<dbReference type="SMR" id="Q52154"/>
<dbReference type="eggNOG" id="COG1414">
    <property type="taxonomic scope" value="Bacteria"/>
</dbReference>
<dbReference type="GO" id="GO:0003677">
    <property type="term" value="F:DNA binding"/>
    <property type="evidence" value="ECO:0007669"/>
    <property type="project" value="UniProtKB-KW"/>
</dbReference>
<dbReference type="GO" id="GO:0003700">
    <property type="term" value="F:DNA-binding transcription factor activity"/>
    <property type="evidence" value="ECO:0007669"/>
    <property type="project" value="TreeGrafter"/>
</dbReference>
<dbReference type="GO" id="GO:0046278">
    <property type="term" value="P:3,4-dihydroxybenzoate metabolic process"/>
    <property type="evidence" value="ECO:0007669"/>
    <property type="project" value="InterPro"/>
</dbReference>
<dbReference type="GO" id="GO:0009056">
    <property type="term" value="P:catabolic process"/>
    <property type="evidence" value="ECO:0007669"/>
    <property type="project" value="UniProtKB-KW"/>
</dbReference>
<dbReference type="GO" id="GO:0045892">
    <property type="term" value="P:negative regulation of DNA-templated transcription"/>
    <property type="evidence" value="ECO:0007669"/>
    <property type="project" value="TreeGrafter"/>
</dbReference>
<dbReference type="GO" id="GO:0045893">
    <property type="term" value="P:positive regulation of DNA-templated transcription"/>
    <property type="evidence" value="ECO:0007669"/>
    <property type="project" value="InterPro"/>
</dbReference>
<dbReference type="FunFam" id="1.10.10.10:FF:000317">
    <property type="entry name" value="IclR family transcriptional regulator"/>
    <property type="match status" value="1"/>
</dbReference>
<dbReference type="FunFam" id="3.30.450.40:FF:000039">
    <property type="entry name" value="IclR family transcriptional regulator"/>
    <property type="match status" value="1"/>
</dbReference>
<dbReference type="Gene3D" id="3.30.450.40">
    <property type="match status" value="1"/>
</dbReference>
<dbReference type="Gene3D" id="1.10.10.10">
    <property type="entry name" value="Winged helix-like DNA-binding domain superfamily/Winged helix DNA-binding domain"/>
    <property type="match status" value="1"/>
</dbReference>
<dbReference type="InterPro" id="IPR029016">
    <property type="entry name" value="GAF-like_dom_sf"/>
</dbReference>
<dbReference type="InterPro" id="IPR050707">
    <property type="entry name" value="HTH_MetabolicPath_Reg"/>
</dbReference>
<dbReference type="InterPro" id="IPR012794">
    <property type="entry name" value="PcaR_PcaU"/>
</dbReference>
<dbReference type="InterPro" id="IPR014757">
    <property type="entry name" value="Tscrpt_reg_IclR_C"/>
</dbReference>
<dbReference type="InterPro" id="IPR005471">
    <property type="entry name" value="Tscrpt_reg_IclR_N"/>
</dbReference>
<dbReference type="InterPro" id="IPR036388">
    <property type="entry name" value="WH-like_DNA-bd_sf"/>
</dbReference>
<dbReference type="InterPro" id="IPR036390">
    <property type="entry name" value="WH_DNA-bd_sf"/>
</dbReference>
<dbReference type="NCBIfam" id="TIGR02431">
    <property type="entry name" value="pcaR_pcaU"/>
    <property type="match status" value="1"/>
</dbReference>
<dbReference type="PANTHER" id="PTHR30136">
    <property type="entry name" value="HELIX-TURN-HELIX TRANSCRIPTIONAL REGULATOR, ICLR FAMILY"/>
    <property type="match status" value="1"/>
</dbReference>
<dbReference type="PANTHER" id="PTHR30136:SF34">
    <property type="entry name" value="TRANSCRIPTIONAL REGULATOR"/>
    <property type="match status" value="1"/>
</dbReference>
<dbReference type="Pfam" id="PF09339">
    <property type="entry name" value="HTH_IclR"/>
    <property type="match status" value="1"/>
</dbReference>
<dbReference type="Pfam" id="PF01614">
    <property type="entry name" value="IclR_C"/>
    <property type="match status" value="1"/>
</dbReference>
<dbReference type="SMART" id="SM00346">
    <property type="entry name" value="HTH_ICLR"/>
    <property type="match status" value="1"/>
</dbReference>
<dbReference type="SUPFAM" id="SSF55781">
    <property type="entry name" value="GAF domain-like"/>
    <property type="match status" value="1"/>
</dbReference>
<dbReference type="SUPFAM" id="SSF46785">
    <property type="entry name" value="Winged helix' DNA-binding domain"/>
    <property type="match status" value="1"/>
</dbReference>
<dbReference type="PROSITE" id="PS51077">
    <property type="entry name" value="HTH_ICLR"/>
    <property type="match status" value="1"/>
</dbReference>
<dbReference type="PROSITE" id="PS51078">
    <property type="entry name" value="ICLR_ED"/>
    <property type="match status" value="1"/>
</dbReference>
<proteinExistence type="evidence at transcript level"/>
<name>PCAR_PSEPU</name>